<name>RPOC_LIMF3</name>
<gene>
    <name evidence="1" type="primary">rpoC</name>
    <name type="ordered locus">LAF_1522</name>
</gene>
<evidence type="ECO:0000255" key="1">
    <source>
        <dbReference type="HAMAP-Rule" id="MF_01322"/>
    </source>
</evidence>
<keyword id="KW-0240">DNA-directed RNA polymerase</keyword>
<keyword id="KW-0460">Magnesium</keyword>
<keyword id="KW-0479">Metal-binding</keyword>
<keyword id="KW-0548">Nucleotidyltransferase</keyword>
<keyword id="KW-1185">Reference proteome</keyword>
<keyword id="KW-0804">Transcription</keyword>
<keyword id="KW-0808">Transferase</keyword>
<keyword id="KW-0862">Zinc</keyword>
<protein>
    <recommendedName>
        <fullName evidence="1">DNA-directed RNA polymerase subunit beta'</fullName>
        <shortName evidence="1">RNAP subunit beta'</shortName>
        <ecNumber evidence="1">2.7.7.6</ecNumber>
    </recommendedName>
    <alternativeName>
        <fullName evidence="1">RNA polymerase subunit beta'</fullName>
    </alternativeName>
    <alternativeName>
        <fullName evidence="1">Transcriptase subunit beta'</fullName>
    </alternativeName>
</protein>
<accession>B2GDX6</accession>
<dbReference type="EC" id="2.7.7.6" evidence="1"/>
<dbReference type="EMBL" id="AP008937">
    <property type="protein sequence ID" value="BAG27858.1"/>
    <property type="molecule type" value="Genomic_DNA"/>
</dbReference>
<dbReference type="RefSeq" id="WP_012391597.1">
    <property type="nucleotide sequence ID" value="NC_010610.1"/>
</dbReference>
<dbReference type="SMR" id="B2GDX6"/>
<dbReference type="KEGG" id="lfe:LAF_1522"/>
<dbReference type="PATRIC" id="fig|334390.5.peg.1669"/>
<dbReference type="eggNOG" id="COG0086">
    <property type="taxonomic scope" value="Bacteria"/>
</dbReference>
<dbReference type="HOGENOM" id="CLU_000524_3_1_9"/>
<dbReference type="Proteomes" id="UP000001697">
    <property type="component" value="Chromosome"/>
</dbReference>
<dbReference type="GO" id="GO:0000428">
    <property type="term" value="C:DNA-directed RNA polymerase complex"/>
    <property type="evidence" value="ECO:0007669"/>
    <property type="project" value="UniProtKB-KW"/>
</dbReference>
<dbReference type="GO" id="GO:0003677">
    <property type="term" value="F:DNA binding"/>
    <property type="evidence" value="ECO:0007669"/>
    <property type="project" value="UniProtKB-UniRule"/>
</dbReference>
<dbReference type="GO" id="GO:0003899">
    <property type="term" value="F:DNA-directed RNA polymerase activity"/>
    <property type="evidence" value="ECO:0007669"/>
    <property type="project" value="UniProtKB-UniRule"/>
</dbReference>
<dbReference type="GO" id="GO:0000287">
    <property type="term" value="F:magnesium ion binding"/>
    <property type="evidence" value="ECO:0007669"/>
    <property type="project" value="UniProtKB-UniRule"/>
</dbReference>
<dbReference type="GO" id="GO:0008270">
    <property type="term" value="F:zinc ion binding"/>
    <property type="evidence" value="ECO:0007669"/>
    <property type="project" value="UniProtKB-UniRule"/>
</dbReference>
<dbReference type="GO" id="GO:0006351">
    <property type="term" value="P:DNA-templated transcription"/>
    <property type="evidence" value="ECO:0007669"/>
    <property type="project" value="UniProtKB-UniRule"/>
</dbReference>
<dbReference type="CDD" id="cd02655">
    <property type="entry name" value="RNAP_beta'_C"/>
    <property type="match status" value="1"/>
</dbReference>
<dbReference type="CDD" id="cd01609">
    <property type="entry name" value="RNAP_beta'_N"/>
    <property type="match status" value="1"/>
</dbReference>
<dbReference type="FunFam" id="1.10.150.390:FF:000002">
    <property type="entry name" value="DNA-directed RNA polymerase subunit beta"/>
    <property type="match status" value="1"/>
</dbReference>
<dbReference type="Gene3D" id="1.10.132.30">
    <property type="match status" value="1"/>
</dbReference>
<dbReference type="Gene3D" id="1.10.150.390">
    <property type="match status" value="1"/>
</dbReference>
<dbReference type="Gene3D" id="1.10.1790.20">
    <property type="match status" value="1"/>
</dbReference>
<dbReference type="Gene3D" id="1.10.40.90">
    <property type="match status" value="1"/>
</dbReference>
<dbReference type="Gene3D" id="2.40.40.20">
    <property type="match status" value="1"/>
</dbReference>
<dbReference type="Gene3D" id="2.40.50.100">
    <property type="match status" value="1"/>
</dbReference>
<dbReference type="Gene3D" id="4.10.860.120">
    <property type="entry name" value="RNA polymerase II, clamp domain"/>
    <property type="match status" value="1"/>
</dbReference>
<dbReference type="Gene3D" id="1.10.274.100">
    <property type="entry name" value="RNA polymerase Rpb1, domain 3"/>
    <property type="match status" value="1"/>
</dbReference>
<dbReference type="HAMAP" id="MF_01322">
    <property type="entry name" value="RNApol_bact_RpoC"/>
    <property type="match status" value="1"/>
</dbReference>
<dbReference type="InterPro" id="IPR045867">
    <property type="entry name" value="DNA-dir_RpoC_beta_prime"/>
</dbReference>
<dbReference type="InterPro" id="IPR012754">
    <property type="entry name" value="DNA-dir_RpoC_beta_prime_bact"/>
</dbReference>
<dbReference type="InterPro" id="IPR000722">
    <property type="entry name" value="RNA_pol_asu"/>
</dbReference>
<dbReference type="InterPro" id="IPR006592">
    <property type="entry name" value="RNA_pol_N"/>
</dbReference>
<dbReference type="InterPro" id="IPR007080">
    <property type="entry name" value="RNA_pol_Rpb1_1"/>
</dbReference>
<dbReference type="InterPro" id="IPR007066">
    <property type="entry name" value="RNA_pol_Rpb1_3"/>
</dbReference>
<dbReference type="InterPro" id="IPR042102">
    <property type="entry name" value="RNA_pol_Rpb1_3_sf"/>
</dbReference>
<dbReference type="InterPro" id="IPR007083">
    <property type="entry name" value="RNA_pol_Rpb1_4"/>
</dbReference>
<dbReference type="InterPro" id="IPR007081">
    <property type="entry name" value="RNA_pol_Rpb1_5"/>
</dbReference>
<dbReference type="InterPro" id="IPR044893">
    <property type="entry name" value="RNA_pol_Rpb1_clamp_domain"/>
</dbReference>
<dbReference type="InterPro" id="IPR038120">
    <property type="entry name" value="Rpb1_funnel_sf"/>
</dbReference>
<dbReference type="NCBIfam" id="TIGR02386">
    <property type="entry name" value="rpoC_TIGR"/>
    <property type="match status" value="1"/>
</dbReference>
<dbReference type="PANTHER" id="PTHR19376">
    <property type="entry name" value="DNA-DIRECTED RNA POLYMERASE"/>
    <property type="match status" value="1"/>
</dbReference>
<dbReference type="PANTHER" id="PTHR19376:SF54">
    <property type="entry name" value="DNA-DIRECTED RNA POLYMERASE SUBUNIT BETA"/>
    <property type="match status" value="1"/>
</dbReference>
<dbReference type="Pfam" id="PF04997">
    <property type="entry name" value="RNA_pol_Rpb1_1"/>
    <property type="match status" value="1"/>
</dbReference>
<dbReference type="Pfam" id="PF00623">
    <property type="entry name" value="RNA_pol_Rpb1_2"/>
    <property type="match status" value="1"/>
</dbReference>
<dbReference type="Pfam" id="PF04983">
    <property type="entry name" value="RNA_pol_Rpb1_3"/>
    <property type="match status" value="1"/>
</dbReference>
<dbReference type="Pfam" id="PF05000">
    <property type="entry name" value="RNA_pol_Rpb1_4"/>
    <property type="match status" value="1"/>
</dbReference>
<dbReference type="Pfam" id="PF04998">
    <property type="entry name" value="RNA_pol_Rpb1_5"/>
    <property type="match status" value="1"/>
</dbReference>
<dbReference type="SMART" id="SM00663">
    <property type="entry name" value="RPOLA_N"/>
    <property type="match status" value="1"/>
</dbReference>
<dbReference type="SUPFAM" id="SSF64484">
    <property type="entry name" value="beta and beta-prime subunits of DNA dependent RNA-polymerase"/>
    <property type="match status" value="1"/>
</dbReference>
<reference key="1">
    <citation type="journal article" date="2008" name="DNA Res.">
        <title>Comparative genome analysis of Lactobacillus reuteri and Lactobacillus fermentum reveal a genomic island for reuterin and cobalamin production.</title>
        <authorList>
            <person name="Morita H."/>
            <person name="Toh H."/>
            <person name="Fukuda S."/>
            <person name="Horikawa H."/>
            <person name="Oshima K."/>
            <person name="Suzuki T."/>
            <person name="Murakami M."/>
            <person name="Hisamatsu S."/>
            <person name="Kato Y."/>
            <person name="Takizawa T."/>
            <person name="Fukuoka H."/>
            <person name="Yoshimura T."/>
            <person name="Itoh K."/>
            <person name="O'Sullivan D.J."/>
            <person name="McKay L.L."/>
            <person name="Ohno H."/>
            <person name="Kikuchi J."/>
            <person name="Masaoka T."/>
            <person name="Hattori M."/>
        </authorList>
    </citation>
    <scope>NUCLEOTIDE SEQUENCE [LARGE SCALE GENOMIC DNA]</scope>
    <source>
        <strain>NBRC 3956 / LMG 18251</strain>
    </source>
</reference>
<proteinExistence type="inferred from homology"/>
<organism>
    <name type="scientific">Limosilactobacillus fermentum (strain NBRC 3956 / LMG 18251)</name>
    <name type="common">Lactobacillus fermentum</name>
    <dbReference type="NCBI Taxonomy" id="334390"/>
    <lineage>
        <taxon>Bacteria</taxon>
        <taxon>Bacillati</taxon>
        <taxon>Bacillota</taxon>
        <taxon>Bacilli</taxon>
        <taxon>Lactobacillales</taxon>
        <taxon>Lactobacillaceae</taxon>
        <taxon>Limosilactobacillus</taxon>
    </lineage>
</organism>
<sequence length="1215" mass="135577">MIDVNNFESMEIGLASPMKIRSWSYGEVTKPETINYRTLKPEKDGLFDERIFGPTKDFECACGRYKRARYNKRVCERCGVEVTSAKVRRERMGHIELAAPASHIWYFKGIPSRMGLVLDMSPRELEEVIYFASYVVLDAGDTGLEKKQLLSEPRYRELKEEYGNRFTAEMGAEAIQKLLADVDLAKEATELKAVLKEATGQKRTRAVRRLDILEAFLKSGNKPEWMVMDVIPVMPPDLRPMVQLEGGRFATSDLNDLYRRVINRNNRLKRLLELNAPGIIVQNEKRMLQEAVDALIDNGRRGRPVAGPGNRPLKSLSHLLKGKQGRFRQNLLGKRVDYSGRSVIDVGPSMKMNQMGLPVPMAMELFKPFIIHELTKRNLATNVKAAKRMIDKRDEKVFDVLEDVIKEHPVLLNRAPTLHRLGIQAFEPILVSGKAMRLHPLVCAAYNADFDGDQMAIHVPLSDEAQAEARLLMLAAHHILSPRDGEPIVAPSQDMVIGNYYMTTEDKAREGEGMIFKDTNEARMAYRNGYVALQTRVGVLTSSFDKKPFTAEQRQKIMVTSVGKLLFNNIMPEDYTYINEPTADNLQNGVPDKYFLEPGEDIHAYLENAPLVPPFKKGFLSDIIADVYKIYKVTVTSQLLDRIKDLGYYESTISGLTVGIADVTDLKEKPEIIEKAHKQVALVTKQFRRGLITDNERYERVIGIWNDAKDEVQNKLIEHMDIHNPINMMSDSGARGNISNFTQLAGMRGLMASPSGKIMELPILSNFREGLSVLEMFISSHGARKGMTDTALKTANSGYLTRRLVDVAQDVIVREKDCGTDRGLEVTAITNGNEMIEPLYDRILGRYTMKSVFNPETGEKIVGKNVLLNEEMAQKIIDAGVQKVTIRSAFTCNTEHGVCERCYGRNAATGDQVEAGEAIGTVAAQSIGEPGTQLTLRNFHTGGVAGNDDITQGLPRIQEIVESRNPKGKATISEVTGQVVSIEENPAEQTKDVTIKGETDTRTYTLPITARIRVAEGDDIHRGRAINEGSIDPKEMIRVRDVLSTETYLLSEVQNVYRMQGIDLLDKHVEIMIRQMMRKVRVMDPGDTDVLPGELLDISQFRDANYQTLISGGIPATARPVILGITKAALETNSFLSAASFQETTRVLTDAAIRGKNDPLVGLKENVIIGKIIPAGTGMGAYRNIKPKEVSVNTGATDGAITSIREMEEQLKDQD</sequence>
<comment type="function">
    <text evidence="1">DNA-dependent RNA polymerase catalyzes the transcription of DNA into RNA using the four ribonucleoside triphosphates as substrates.</text>
</comment>
<comment type="catalytic activity">
    <reaction evidence="1">
        <text>RNA(n) + a ribonucleoside 5'-triphosphate = RNA(n+1) + diphosphate</text>
        <dbReference type="Rhea" id="RHEA:21248"/>
        <dbReference type="Rhea" id="RHEA-COMP:14527"/>
        <dbReference type="Rhea" id="RHEA-COMP:17342"/>
        <dbReference type="ChEBI" id="CHEBI:33019"/>
        <dbReference type="ChEBI" id="CHEBI:61557"/>
        <dbReference type="ChEBI" id="CHEBI:140395"/>
        <dbReference type="EC" id="2.7.7.6"/>
    </reaction>
</comment>
<comment type="cofactor">
    <cofactor evidence="1">
        <name>Mg(2+)</name>
        <dbReference type="ChEBI" id="CHEBI:18420"/>
    </cofactor>
    <text evidence="1">Binds 1 Mg(2+) ion per subunit.</text>
</comment>
<comment type="cofactor">
    <cofactor evidence="1">
        <name>Zn(2+)</name>
        <dbReference type="ChEBI" id="CHEBI:29105"/>
    </cofactor>
    <text evidence="1">Binds 2 Zn(2+) ions per subunit.</text>
</comment>
<comment type="subunit">
    <text evidence="1">The RNAP catalytic core consists of 2 alpha, 1 beta, 1 beta' and 1 omega subunit. When a sigma factor is associated with the core the holoenzyme is formed, which can initiate transcription.</text>
</comment>
<comment type="similarity">
    <text evidence="1">Belongs to the RNA polymerase beta' chain family.</text>
</comment>
<feature type="chain" id="PRO_1000141775" description="DNA-directed RNA polymerase subunit beta'">
    <location>
        <begin position="1"/>
        <end position="1215"/>
    </location>
</feature>
<feature type="binding site" evidence="1">
    <location>
        <position position="60"/>
    </location>
    <ligand>
        <name>Zn(2+)</name>
        <dbReference type="ChEBI" id="CHEBI:29105"/>
        <label>1</label>
    </ligand>
</feature>
<feature type="binding site" evidence="1">
    <location>
        <position position="62"/>
    </location>
    <ligand>
        <name>Zn(2+)</name>
        <dbReference type="ChEBI" id="CHEBI:29105"/>
        <label>1</label>
    </ligand>
</feature>
<feature type="binding site" evidence="1">
    <location>
        <position position="75"/>
    </location>
    <ligand>
        <name>Zn(2+)</name>
        <dbReference type="ChEBI" id="CHEBI:29105"/>
        <label>1</label>
    </ligand>
</feature>
<feature type="binding site" evidence="1">
    <location>
        <position position="78"/>
    </location>
    <ligand>
        <name>Zn(2+)</name>
        <dbReference type="ChEBI" id="CHEBI:29105"/>
        <label>1</label>
    </ligand>
</feature>
<feature type="binding site" evidence="1">
    <location>
        <position position="449"/>
    </location>
    <ligand>
        <name>Mg(2+)</name>
        <dbReference type="ChEBI" id="CHEBI:18420"/>
    </ligand>
</feature>
<feature type="binding site" evidence="1">
    <location>
        <position position="451"/>
    </location>
    <ligand>
        <name>Mg(2+)</name>
        <dbReference type="ChEBI" id="CHEBI:18420"/>
    </ligand>
</feature>
<feature type="binding site" evidence="1">
    <location>
        <position position="453"/>
    </location>
    <ligand>
        <name>Mg(2+)</name>
        <dbReference type="ChEBI" id="CHEBI:18420"/>
    </ligand>
</feature>
<feature type="binding site" evidence="1">
    <location>
        <position position="818"/>
    </location>
    <ligand>
        <name>Zn(2+)</name>
        <dbReference type="ChEBI" id="CHEBI:29105"/>
        <label>2</label>
    </ligand>
</feature>
<feature type="binding site" evidence="1">
    <location>
        <position position="892"/>
    </location>
    <ligand>
        <name>Zn(2+)</name>
        <dbReference type="ChEBI" id="CHEBI:29105"/>
        <label>2</label>
    </ligand>
</feature>
<feature type="binding site" evidence="1">
    <location>
        <position position="899"/>
    </location>
    <ligand>
        <name>Zn(2+)</name>
        <dbReference type="ChEBI" id="CHEBI:29105"/>
        <label>2</label>
    </ligand>
</feature>
<feature type="binding site" evidence="1">
    <location>
        <position position="902"/>
    </location>
    <ligand>
        <name>Zn(2+)</name>
        <dbReference type="ChEBI" id="CHEBI:29105"/>
        <label>2</label>
    </ligand>
</feature>